<proteinExistence type="inferred from homology"/>
<accession>Q86AF0</accession>
<accession>Q55AZ1</accession>
<sequence>MENSGLLFNNDETIINKKIKKIIYENQYDKPLFYDIDLRKNNKKLIYLLDWFCVVVLLVIGSILLLKVPVRGRLFRLNDESISYPKLEEIIPLGLLIPLVTAVPFAMILLISIIFKRDINDFHHSLLGFLQSISVTILLTGSFKVFIGGLRPSFLEFCKPTKESIVAGNPPVGYGAIYYDRSICTESEFIVNDGLSAYPSGHSSIAASCFGFLALYLLARLKCFDNRGHIIIYLLIIGCLITAGLIGISRVADYRHTFLNVLAGWSIGLLISLSCYRLNFSSLFGRDNHISIHSHWLTYWDYHNNNNNSNSNNNNNNNNNNNNNNNNNNNNNNNKKDNINNNSTKTQNNFESYQSPNGIPLNELQN</sequence>
<keyword id="KW-0472">Membrane</keyword>
<keyword id="KW-1185">Reference proteome</keyword>
<keyword id="KW-0812">Transmembrane</keyword>
<keyword id="KW-1133">Transmembrane helix</keyword>
<organism>
    <name type="scientific">Dictyostelium discoideum</name>
    <name type="common">Social amoeba</name>
    <dbReference type="NCBI Taxonomy" id="44689"/>
    <lineage>
        <taxon>Eukaryota</taxon>
        <taxon>Amoebozoa</taxon>
        <taxon>Evosea</taxon>
        <taxon>Eumycetozoa</taxon>
        <taxon>Dictyostelia</taxon>
        <taxon>Dictyosteliales</taxon>
        <taxon>Dictyosteliaceae</taxon>
        <taxon>Dictyostelium</taxon>
    </lineage>
</organism>
<comment type="subcellular location">
    <subcellularLocation>
        <location evidence="3">Membrane</location>
        <topology evidence="3">Multi-pass membrane protein</topology>
    </subcellularLocation>
</comment>
<comment type="similarity">
    <text evidence="3">Belongs to the PA-phosphatase related phosphoesterase family.</text>
</comment>
<dbReference type="EMBL" id="AAFI02000006">
    <property type="protein sequence ID" value="EAL71622.1"/>
    <property type="molecule type" value="Genomic_DNA"/>
</dbReference>
<dbReference type="RefSeq" id="XP_645555.1">
    <property type="nucleotide sequence ID" value="XM_640463.1"/>
</dbReference>
<dbReference type="STRING" id="44689.Q86AF0"/>
<dbReference type="PaxDb" id="44689-DDB0232324"/>
<dbReference type="EnsemblProtists" id="EAL71622">
    <property type="protein sequence ID" value="EAL71622"/>
    <property type="gene ID" value="DDB_G0271516"/>
</dbReference>
<dbReference type="GeneID" id="8618012"/>
<dbReference type="KEGG" id="ddi:DDB_G0271516"/>
<dbReference type="dictyBase" id="DDB_G0271516"/>
<dbReference type="VEuPathDB" id="AmoebaDB:DDB_G0271516"/>
<dbReference type="eggNOG" id="KOG3030">
    <property type="taxonomic scope" value="Eukaryota"/>
</dbReference>
<dbReference type="HOGENOM" id="CLU_757429_0_0_1"/>
<dbReference type="InParanoid" id="Q86AF0"/>
<dbReference type="OMA" id="WDINNGI"/>
<dbReference type="PhylomeDB" id="Q86AF0"/>
<dbReference type="Reactome" id="R-DDI-2029485">
    <property type="pathway name" value="Role of phospholipids in phagocytosis"/>
</dbReference>
<dbReference type="Reactome" id="R-DDI-419408">
    <property type="pathway name" value="Lysosphingolipid and LPA receptors"/>
</dbReference>
<dbReference type="Reactome" id="R-DDI-9845614">
    <property type="pathway name" value="Sphingolipid catabolism"/>
</dbReference>
<dbReference type="PRO" id="PR:Q86AF0"/>
<dbReference type="Proteomes" id="UP000002195">
    <property type="component" value="Chromosome 2"/>
</dbReference>
<dbReference type="GO" id="GO:0016020">
    <property type="term" value="C:membrane"/>
    <property type="evidence" value="ECO:0000318"/>
    <property type="project" value="GO_Central"/>
</dbReference>
<dbReference type="GO" id="GO:0008195">
    <property type="term" value="F:phosphatidate phosphatase activity"/>
    <property type="evidence" value="ECO:0000318"/>
    <property type="project" value="GO_Central"/>
</dbReference>
<dbReference type="GO" id="GO:0046839">
    <property type="term" value="P:phospholipid dephosphorylation"/>
    <property type="evidence" value="ECO:0000318"/>
    <property type="project" value="GO_Central"/>
</dbReference>
<dbReference type="GO" id="GO:0006644">
    <property type="term" value="P:phospholipid metabolic process"/>
    <property type="evidence" value="ECO:0000318"/>
    <property type="project" value="GO_Central"/>
</dbReference>
<dbReference type="CDD" id="cd03390">
    <property type="entry name" value="PAP2_containing_1_like"/>
    <property type="match status" value="1"/>
</dbReference>
<dbReference type="FunFam" id="1.20.144.10:FF:000067">
    <property type="entry name" value="PA-phosphatase related-family protein DDB_G0275547"/>
    <property type="match status" value="1"/>
</dbReference>
<dbReference type="Gene3D" id="1.20.144.10">
    <property type="entry name" value="Phosphatidic acid phosphatase type 2/haloperoxidase"/>
    <property type="match status" value="1"/>
</dbReference>
<dbReference type="InterPro" id="IPR036938">
    <property type="entry name" value="P_Acid_Pase_2/haloperoxi_sf"/>
</dbReference>
<dbReference type="InterPro" id="IPR000326">
    <property type="entry name" value="P_Acid_Pase_2/haloperoxidase"/>
</dbReference>
<dbReference type="InterPro" id="IPR043216">
    <property type="entry name" value="PA_PP_rel"/>
</dbReference>
<dbReference type="PANTHER" id="PTHR10165">
    <property type="entry name" value="LIPID PHOSPHATE PHOSPHATASE"/>
    <property type="match status" value="1"/>
</dbReference>
<dbReference type="PANTHER" id="PTHR10165:SF108">
    <property type="entry name" value="PA-PHOSPHATASE RELATED-FAMILY PROTEIN DDB_G0271516-RELATED"/>
    <property type="match status" value="1"/>
</dbReference>
<dbReference type="Pfam" id="PF01569">
    <property type="entry name" value="PAP2"/>
    <property type="match status" value="1"/>
</dbReference>
<dbReference type="SMART" id="SM00014">
    <property type="entry name" value="acidPPc"/>
    <property type="match status" value="1"/>
</dbReference>
<dbReference type="SUPFAM" id="SSF48317">
    <property type="entry name" value="Acid phosphatase/Vanadium-dependent haloperoxidase"/>
    <property type="match status" value="1"/>
</dbReference>
<name>Y7151_DICDI</name>
<reference key="1">
    <citation type="journal article" date="2002" name="Nature">
        <title>Sequence and analysis of chromosome 2 of Dictyostelium discoideum.</title>
        <authorList>
            <person name="Gloeckner G."/>
            <person name="Eichinger L."/>
            <person name="Szafranski K."/>
            <person name="Pachebat J.A."/>
            <person name="Bankier A.T."/>
            <person name="Dear P.H."/>
            <person name="Lehmann R."/>
            <person name="Baumgart C."/>
            <person name="Parra G."/>
            <person name="Abril J.F."/>
            <person name="Guigo R."/>
            <person name="Kumpf K."/>
            <person name="Tunggal B."/>
            <person name="Cox E.C."/>
            <person name="Quail M.A."/>
            <person name="Platzer M."/>
            <person name="Rosenthal A."/>
            <person name="Noegel A.A."/>
        </authorList>
    </citation>
    <scope>NUCLEOTIDE SEQUENCE [LARGE SCALE GENOMIC DNA]</scope>
    <source>
        <strain>AX4</strain>
    </source>
</reference>
<reference key="2">
    <citation type="journal article" date="2005" name="Nature">
        <title>The genome of the social amoeba Dictyostelium discoideum.</title>
        <authorList>
            <person name="Eichinger L."/>
            <person name="Pachebat J.A."/>
            <person name="Gloeckner G."/>
            <person name="Rajandream M.A."/>
            <person name="Sucgang R."/>
            <person name="Berriman M."/>
            <person name="Song J."/>
            <person name="Olsen R."/>
            <person name="Szafranski K."/>
            <person name="Xu Q."/>
            <person name="Tunggal B."/>
            <person name="Kummerfeld S."/>
            <person name="Madera M."/>
            <person name="Konfortov B.A."/>
            <person name="Rivero F."/>
            <person name="Bankier A.T."/>
            <person name="Lehmann R."/>
            <person name="Hamlin N."/>
            <person name="Davies R."/>
            <person name="Gaudet P."/>
            <person name="Fey P."/>
            <person name="Pilcher K."/>
            <person name="Chen G."/>
            <person name="Saunders D."/>
            <person name="Sodergren E.J."/>
            <person name="Davis P."/>
            <person name="Kerhornou A."/>
            <person name="Nie X."/>
            <person name="Hall N."/>
            <person name="Anjard C."/>
            <person name="Hemphill L."/>
            <person name="Bason N."/>
            <person name="Farbrother P."/>
            <person name="Desany B."/>
            <person name="Just E."/>
            <person name="Morio T."/>
            <person name="Rost R."/>
            <person name="Churcher C.M."/>
            <person name="Cooper J."/>
            <person name="Haydock S."/>
            <person name="van Driessche N."/>
            <person name="Cronin A."/>
            <person name="Goodhead I."/>
            <person name="Muzny D.M."/>
            <person name="Mourier T."/>
            <person name="Pain A."/>
            <person name="Lu M."/>
            <person name="Harper D."/>
            <person name="Lindsay R."/>
            <person name="Hauser H."/>
            <person name="James K.D."/>
            <person name="Quiles M."/>
            <person name="Madan Babu M."/>
            <person name="Saito T."/>
            <person name="Buchrieser C."/>
            <person name="Wardroper A."/>
            <person name="Felder M."/>
            <person name="Thangavelu M."/>
            <person name="Johnson D."/>
            <person name="Knights A."/>
            <person name="Loulseged H."/>
            <person name="Mungall K.L."/>
            <person name="Oliver K."/>
            <person name="Price C."/>
            <person name="Quail M.A."/>
            <person name="Urushihara H."/>
            <person name="Hernandez J."/>
            <person name="Rabbinowitsch E."/>
            <person name="Steffen D."/>
            <person name="Sanders M."/>
            <person name="Ma J."/>
            <person name="Kohara Y."/>
            <person name="Sharp S."/>
            <person name="Simmonds M.N."/>
            <person name="Spiegler S."/>
            <person name="Tivey A."/>
            <person name="Sugano S."/>
            <person name="White B."/>
            <person name="Walker D."/>
            <person name="Woodward J.R."/>
            <person name="Winckler T."/>
            <person name="Tanaka Y."/>
            <person name="Shaulsky G."/>
            <person name="Schleicher M."/>
            <person name="Weinstock G.M."/>
            <person name="Rosenthal A."/>
            <person name="Cox E.C."/>
            <person name="Chisholm R.L."/>
            <person name="Gibbs R.A."/>
            <person name="Loomis W.F."/>
            <person name="Platzer M."/>
            <person name="Kay R.R."/>
            <person name="Williams J.G."/>
            <person name="Dear P.H."/>
            <person name="Noegel A.A."/>
            <person name="Barrell B.G."/>
            <person name="Kuspa A."/>
        </authorList>
    </citation>
    <scope>NUCLEOTIDE SEQUENCE [LARGE SCALE GENOMIC DNA]</scope>
    <source>
        <strain>AX4</strain>
    </source>
</reference>
<evidence type="ECO:0000255" key="1"/>
<evidence type="ECO:0000256" key="2">
    <source>
        <dbReference type="SAM" id="MobiDB-lite"/>
    </source>
</evidence>
<evidence type="ECO:0000305" key="3"/>
<protein>
    <recommendedName>
        <fullName>PA-phosphatase related-family protein DDB_G0271516</fullName>
    </recommendedName>
</protein>
<feature type="chain" id="PRO_0000367484" description="PA-phosphatase related-family protein DDB_G0271516">
    <location>
        <begin position="1"/>
        <end position="366"/>
    </location>
</feature>
<feature type="transmembrane region" description="Helical" evidence="1">
    <location>
        <begin position="45"/>
        <end position="65"/>
    </location>
</feature>
<feature type="transmembrane region" description="Helical" evidence="1">
    <location>
        <begin position="95"/>
        <end position="115"/>
    </location>
</feature>
<feature type="transmembrane region" description="Helical" evidence="1">
    <location>
        <begin position="127"/>
        <end position="147"/>
    </location>
</feature>
<feature type="transmembrane region" description="Helical" evidence="1">
    <location>
        <begin position="199"/>
        <end position="219"/>
    </location>
</feature>
<feature type="transmembrane region" description="Helical" evidence="1">
    <location>
        <begin position="228"/>
        <end position="248"/>
    </location>
</feature>
<feature type="transmembrane region" description="Helical" evidence="1">
    <location>
        <begin position="256"/>
        <end position="276"/>
    </location>
</feature>
<feature type="region of interest" description="Disordered" evidence="2">
    <location>
        <begin position="308"/>
        <end position="366"/>
    </location>
</feature>
<feature type="compositionally biased region" description="Low complexity" evidence="2">
    <location>
        <begin position="308"/>
        <end position="349"/>
    </location>
</feature>
<feature type="compositionally biased region" description="Polar residues" evidence="2">
    <location>
        <begin position="350"/>
        <end position="366"/>
    </location>
</feature>
<gene>
    <name type="ORF">DDB_G0271516</name>
</gene>